<keyword id="KW-0963">Cytoplasm</keyword>
<keyword id="KW-0479">Metal-binding</keyword>
<keyword id="KW-0539">Nucleus</keyword>
<keyword id="KW-1267">Proteomics identification</keyword>
<keyword id="KW-1185">Reference proteome</keyword>
<keyword id="KW-0678">Repressor</keyword>
<keyword id="KW-0810">Translation regulation</keyword>
<keyword id="KW-0862">Zinc</keyword>
<keyword id="KW-0863">Zinc-finger</keyword>
<sequence length="76" mass="8498">MARGQQKIQSQQKNAKKQAGQKKKQGHDQKAAAKAALIYTCTVCRTQMPDPKTFKQHFESKHPKTPLPPELADVQA</sequence>
<protein>
    <recommendedName>
        <fullName evidence="3">Zinc finger protein 706</fullName>
    </recommendedName>
</protein>
<comment type="function">
    <text evidence="1">Transcription repressor involved in the exit of embryonic stem cells (ESCs) from self-renewal. Acts by repressing expression of KLF4.</text>
</comment>
<comment type="subcellular location">
    <subcellularLocation>
        <location evidence="1">Cytoplasm</location>
    </subcellularLocation>
    <subcellularLocation>
        <location evidence="1">Nucleus</location>
    </subcellularLocation>
</comment>
<evidence type="ECO:0000250" key="1">
    <source>
        <dbReference type="UniProtKB" id="Q9D115"/>
    </source>
</evidence>
<evidence type="ECO:0000256" key="2">
    <source>
        <dbReference type="SAM" id="MobiDB-lite"/>
    </source>
</evidence>
<evidence type="ECO:0000305" key="3"/>
<evidence type="ECO:0000312" key="4">
    <source>
        <dbReference type="HGNC" id="HGNC:24992"/>
    </source>
</evidence>
<accession>Q9Y5V0</accession>
<accession>A8K362</accession>
<organism>
    <name type="scientific">Homo sapiens</name>
    <name type="common">Human</name>
    <dbReference type="NCBI Taxonomy" id="9606"/>
    <lineage>
        <taxon>Eukaryota</taxon>
        <taxon>Metazoa</taxon>
        <taxon>Chordata</taxon>
        <taxon>Craniata</taxon>
        <taxon>Vertebrata</taxon>
        <taxon>Euteleostomi</taxon>
        <taxon>Mammalia</taxon>
        <taxon>Eutheria</taxon>
        <taxon>Euarchontoglires</taxon>
        <taxon>Primates</taxon>
        <taxon>Haplorrhini</taxon>
        <taxon>Catarrhini</taxon>
        <taxon>Hominidae</taxon>
        <taxon>Homo</taxon>
    </lineage>
</organism>
<feature type="chain" id="PRO_0000047703" description="Zinc finger protein 706">
    <location>
        <begin position="1"/>
        <end position="76"/>
    </location>
</feature>
<feature type="zinc finger region" description="C2H2-type">
    <location>
        <begin position="39"/>
        <end position="62"/>
    </location>
</feature>
<feature type="region of interest" description="Disordered" evidence="2">
    <location>
        <begin position="1"/>
        <end position="32"/>
    </location>
</feature>
<feature type="region of interest" description="Disordered" evidence="2">
    <location>
        <begin position="53"/>
        <end position="76"/>
    </location>
</feature>
<feature type="compositionally biased region" description="Low complexity" evidence="2">
    <location>
        <begin position="1"/>
        <end position="13"/>
    </location>
</feature>
<feature type="compositionally biased region" description="Basic residues" evidence="2">
    <location>
        <begin position="14"/>
        <end position="25"/>
    </location>
</feature>
<feature type="compositionally biased region" description="Basic and acidic residues" evidence="2">
    <location>
        <begin position="53"/>
        <end position="62"/>
    </location>
</feature>
<gene>
    <name evidence="4" type="primary">ZNF706</name>
    <name type="ORF">HSPC038</name>
    <name type="ORF">PNAS-113</name>
</gene>
<proteinExistence type="evidence at protein level"/>
<dbReference type="EMBL" id="AF125099">
    <property type="protein sequence ID" value="AAD39916.1"/>
    <property type="molecule type" value="mRNA"/>
</dbReference>
<dbReference type="EMBL" id="AF275809">
    <property type="protein sequence ID" value="AAG23820.1"/>
    <property type="molecule type" value="mRNA"/>
</dbReference>
<dbReference type="EMBL" id="AK290477">
    <property type="protein sequence ID" value="BAF83166.1"/>
    <property type="molecule type" value="mRNA"/>
</dbReference>
<dbReference type="EMBL" id="CH471060">
    <property type="protein sequence ID" value="EAW91831.1"/>
    <property type="molecule type" value="Genomic_DNA"/>
</dbReference>
<dbReference type="EMBL" id="BC015925">
    <property type="protein sequence ID" value="AAH15925.1"/>
    <property type="molecule type" value="mRNA"/>
</dbReference>
<dbReference type="EMBL" id="BC068524">
    <property type="protein sequence ID" value="AAH68524.1"/>
    <property type="molecule type" value="mRNA"/>
</dbReference>
<dbReference type="CCDS" id="CCDS6291.1"/>
<dbReference type="RefSeq" id="NP_001035975.1">
    <property type="nucleotide sequence ID" value="NM_001042510.2"/>
</dbReference>
<dbReference type="RefSeq" id="NP_001254637.1">
    <property type="nucleotide sequence ID" value="NM_001267708.2"/>
</dbReference>
<dbReference type="RefSeq" id="NP_001254638.1">
    <property type="nucleotide sequence ID" value="NM_001267709.2"/>
</dbReference>
<dbReference type="RefSeq" id="NP_057180.1">
    <property type="nucleotide sequence ID" value="NM_016096.5"/>
</dbReference>
<dbReference type="RefSeq" id="XP_047277799.1">
    <property type="nucleotide sequence ID" value="XM_047421843.1"/>
</dbReference>
<dbReference type="RefSeq" id="XP_047277800.1">
    <property type="nucleotide sequence ID" value="XM_047421844.1"/>
</dbReference>
<dbReference type="BioGRID" id="119310">
    <property type="interactions" value="10"/>
</dbReference>
<dbReference type="FunCoup" id="Q9Y5V0">
    <property type="interactions" value="3132"/>
</dbReference>
<dbReference type="IntAct" id="Q9Y5V0">
    <property type="interactions" value="3"/>
</dbReference>
<dbReference type="STRING" id="9606.ENSP00000430823"/>
<dbReference type="GlyGen" id="Q9Y5V0">
    <property type="glycosylation" value="1 site, 1 O-linked glycan (1 site)"/>
</dbReference>
<dbReference type="iPTMnet" id="Q9Y5V0"/>
<dbReference type="PhosphoSitePlus" id="Q9Y5V0"/>
<dbReference type="BioMuta" id="ZNF706"/>
<dbReference type="DMDM" id="74735296"/>
<dbReference type="jPOST" id="Q9Y5V0"/>
<dbReference type="MassIVE" id="Q9Y5V0"/>
<dbReference type="PaxDb" id="9606-ENSP00000430823"/>
<dbReference type="PeptideAtlas" id="Q9Y5V0"/>
<dbReference type="ProteomicsDB" id="86513"/>
<dbReference type="Pumba" id="Q9Y5V0"/>
<dbReference type="TopDownProteomics" id="Q9Y5V0"/>
<dbReference type="Antibodypedia" id="26241">
    <property type="antibodies" value="35 antibodies from 12 providers"/>
</dbReference>
<dbReference type="DNASU" id="51123"/>
<dbReference type="Ensembl" id="ENST00000311212.9">
    <property type="protein sequence ID" value="ENSP00000311768.4"/>
    <property type="gene ID" value="ENSG00000120963.12"/>
</dbReference>
<dbReference type="Ensembl" id="ENST00000517844.5">
    <property type="protein sequence ID" value="ENSP00000428227.1"/>
    <property type="gene ID" value="ENSG00000120963.12"/>
</dbReference>
<dbReference type="Ensembl" id="ENST00000518336.5">
    <property type="protein sequence ID" value="ENSP00000428696.1"/>
    <property type="gene ID" value="ENSG00000120963.12"/>
</dbReference>
<dbReference type="Ensembl" id="ENST00000519882.5">
    <property type="protein sequence ID" value="ENSP00000428985.1"/>
    <property type="gene ID" value="ENSG00000120963.12"/>
</dbReference>
<dbReference type="Ensembl" id="ENST00000520347.5">
    <property type="protein sequence ID" value="ENSP00000430823.1"/>
    <property type="gene ID" value="ENSG00000120963.12"/>
</dbReference>
<dbReference type="Ensembl" id="ENST00000520984.5">
    <property type="protein sequence ID" value="ENSP00000427761.1"/>
    <property type="gene ID" value="ENSG00000120963.12"/>
</dbReference>
<dbReference type="Ensembl" id="ENST00000521272.5">
    <property type="protein sequence ID" value="ENSP00000430165.1"/>
    <property type="gene ID" value="ENSG00000120963.12"/>
</dbReference>
<dbReference type="GeneID" id="51123"/>
<dbReference type="KEGG" id="hsa:51123"/>
<dbReference type="MANE-Select" id="ENST00000311212.9">
    <property type="protein sequence ID" value="ENSP00000311768.4"/>
    <property type="RefSeq nucleotide sequence ID" value="NM_016096.5"/>
    <property type="RefSeq protein sequence ID" value="NP_057180.1"/>
</dbReference>
<dbReference type="UCSC" id="uc003yka.4">
    <property type="organism name" value="human"/>
</dbReference>
<dbReference type="AGR" id="HGNC:24992"/>
<dbReference type="CTD" id="51123"/>
<dbReference type="DisGeNET" id="51123"/>
<dbReference type="GeneCards" id="ZNF706"/>
<dbReference type="HGNC" id="HGNC:24992">
    <property type="gene designation" value="ZNF706"/>
</dbReference>
<dbReference type="HPA" id="ENSG00000120963">
    <property type="expression patterns" value="Low tissue specificity"/>
</dbReference>
<dbReference type="MIM" id="619526">
    <property type="type" value="gene"/>
</dbReference>
<dbReference type="neXtProt" id="NX_Q9Y5V0"/>
<dbReference type="OpenTargets" id="ENSG00000120963"/>
<dbReference type="PharmGKB" id="PA142670505"/>
<dbReference type="VEuPathDB" id="HostDB:ENSG00000120963"/>
<dbReference type="eggNOG" id="KOG4118">
    <property type="taxonomic scope" value="Eukaryota"/>
</dbReference>
<dbReference type="GeneTree" id="ENSGT00390000003465"/>
<dbReference type="HOGENOM" id="CLU_176397_0_0_1"/>
<dbReference type="InParanoid" id="Q9Y5V0"/>
<dbReference type="OMA" id="CDQKGAA"/>
<dbReference type="OrthoDB" id="73348at2759"/>
<dbReference type="PAN-GO" id="Q9Y5V0">
    <property type="GO annotations" value="0 GO annotations based on evolutionary models"/>
</dbReference>
<dbReference type="PhylomeDB" id="Q9Y5V0"/>
<dbReference type="TreeFam" id="TF315171"/>
<dbReference type="PathwayCommons" id="Q9Y5V0"/>
<dbReference type="Reactome" id="R-HSA-212436">
    <property type="pathway name" value="Generic Transcription Pathway"/>
</dbReference>
<dbReference type="SignaLink" id="Q9Y5V0"/>
<dbReference type="BioGRID-ORCS" id="51123">
    <property type="hits" value="37 hits in 1133 CRISPR screens"/>
</dbReference>
<dbReference type="ChiTaRS" id="ZNF706">
    <property type="organism name" value="human"/>
</dbReference>
<dbReference type="GenomeRNAi" id="51123"/>
<dbReference type="Pharos" id="Q9Y5V0">
    <property type="development level" value="Tdark"/>
</dbReference>
<dbReference type="PRO" id="PR:Q9Y5V0"/>
<dbReference type="Proteomes" id="UP000005640">
    <property type="component" value="Chromosome 8"/>
</dbReference>
<dbReference type="RNAct" id="Q9Y5V0">
    <property type="molecule type" value="protein"/>
</dbReference>
<dbReference type="Bgee" id="ENSG00000120963">
    <property type="expression patterns" value="Expressed in body of pancreas and 177 other cell types or tissues"/>
</dbReference>
<dbReference type="ExpressionAtlas" id="Q9Y5V0">
    <property type="expression patterns" value="baseline and differential"/>
</dbReference>
<dbReference type="GO" id="GO:0005737">
    <property type="term" value="C:cytoplasm"/>
    <property type="evidence" value="ECO:0000250"/>
    <property type="project" value="UniProtKB"/>
</dbReference>
<dbReference type="GO" id="GO:0005634">
    <property type="term" value="C:nucleus"/>
    <property type="evidence" value="ECO:0000250"/>
    <property type="project" value="UniProtKB"/>
</dbReference>
<dbReference type="GO" id="GO:0008270">
    <property type="term" value="F:zinc ion binding"/>
    <property type="evidence" value="ECO:0007669"/>
    <property type="project" value="UniProtKB-KW"/>
</dbReference>
<dbReference type="GO" id="GO:0045892">
    <property type="term" value="P:negative regulation of DNA-templated transcription"/>
    <property type="evidence" value="ECO:0000250"/>
    <property type="project" value="UniProtKB"/>
</dbReference>
<dbReference type="GO" id="GO:1902455">
    <property type="term" value="P:negative regulation of stem cell population maintenance"/>
    <property type="evidence" value="ECO:0000250"/>
    <property type="project" value="UniProtKB"/>
</dbReference>
<dbReference type="GO" id="GO:0006417">
    <property type="term" value="P:regulation of translation"/>
    <property type="evidence" value="ECO:0007669"/>
    <property type="project" value="UniProtKB-KW"/>
</dbReference>
<dbReference type="FunFam" id="4.10.1050.10:FF:000001">
    <property type="entry name" value="Zinc finger protein 706"/>
    <property type="match status" value="1"/>
</dbReference>
<dbReference type="Gene3D" id="4.10.1050.10">
    <property type="entry name" value="At2g23090-like"/>
    <property type="match status" value="1"/>
</dbReference>
<dbReference type="InterPro" id="IPR045230">
    <property type="entry name" value="MBS1/2-like"/>
</dbReference>
<dbReference type="InterPro" id="IPR007513">
    <property type="entry name" value="SERF-like_N"/>
</dbReference>
<dbReference type="InterPro" id="IPR026939">
    <property type="entry name" value="ZNF706/At2g23090_sf"/>
</dbReference>
<dbReference type="InterPro" id="IPR013087">
    <property type="entry name" value="Znf_C2H2_type"/>
</dbReference>
<dbReference type="PANTHER" id="PTHR21213">
    <property type="entry name" value="GEO09665P1-RELATED"/>
    <property type="match status" value="1"/>
</dbReference>
<dbReference type="PANTHER" id="PTHR21213:SF0">
    <property type="entry name" value="ZINC FINGER PROTEIN 706"/>
    <property type="match status" value="1"/>
</dbReference>
<dbReference type="Pfam" id="PF04419">
    <property type="entry name" value="SERF-like_N"/>
    <property type="match status" value="1"/>
</dbReference>
<dbReference type="Pfam" id="PF12874">
    <property type="entry name" value="zf-met"/>
    <property type="match status" value="1"/>
</dbReference>
<dbReference type="SUPFAM" id="SSF118359">
    <property type="entry name" value="Expressed protein At2g23090/F21P24.15"/>
    <property type="match status" value="1"/>
</dbReference>
<dbReference type="PROSITE" id="PS00028">
    <property type="entry name" value="ZINC_FINGER_C2H2_1"/>
    <property type="match status" value="1"/>
</dbReference>
<name>ZN706_HUMAN</name>
<reference key="1">
    <citation type="journal article" date="2000" name="Genome Res.">
        <title>Cloning and functional analysis of cDNAs with open reading frames for 300 previously undefined genes expressed in CD34+ hematopoietic stem/progenitor cells.</title>
        <authorList>
            <person name="Zhang Q.-H."/>
            <person name="Ye M."/>
            <person name="Wu X.-Y."/>
            <person name="Ren S.-X."/>
            <person name="Zhao M."/>
            <person name="Zhao C.-J."/>
            <person name="Fu G."/>
            <person name="Shen Y."/>
            <person name="Fan H.-Y."/>
            <person name="Lu G."/>
            <person name="Zhong M."/>
            <person name="Xu X.-R."/>
            <person name="Han Z.-G."/>
            <person name="Zhang J.-W."/>
            <person name="Tao J."/>
            <person name="Huang Q.-H."/>
            <person name="Zhou J."/>
            <person name="Hu G.-X."/>
            <person name="Gu J."/>
            <person name="Chen S.-J."/>
            <person name="Chen Z."/>
        </authorList>
    </citation>
    <scope>NUCLEOTIDE SEQUENCE [LARGE SCALE MRNA]</scope>
    <source>
        <tissue>Umbilical cord blood</tissue>
    </source>
</reference>
<reference key="2">
    <citation type="submission" date="2000-06" db="EMBL/GenBank/DDBJ databases">
        <title>Human acute promyelocytic leukemia cell line NB4's apoptosis related genes.</title>
        <authorList>
            <person name="Yu W.-Q."/>
            <person name="Sun B.-Z."/>
            <person name="Chai Y.-B."/>
            <person name="Zhu F."/>
            <person name="Liu X.-S."/>
            <person name="Li Z."/>
            <person name="Lu F."/>
            <person name="Yan W."/>
            <person name="Yang H."/>
            <person name="Zhao Z.-L."/>
        </authorList>
    </citation>
    <scope>NUCLEOTIDE SEQUENCE [LARGE SCALE MRNA]</scope>
    <source>
        <tissue>Promyelocytic leukemia</tissue>
    </source>
</reference>
<reference key="3">
    <citation type="journal article" date="2004" name="Nat. Genet.">
        <title>Complete sequencing and characterization of 21,243 full-length human cDNAs.</title>
        <authorList>
            <person name="Ota T."/>
            <person name="Suzuki Y."/>
            <person name="Nishikawa T."/>
            <person name="Otsuki T."/>
            <person name="Sugiyama T."/>
            <person name="Irie R."/>
            <person name="Wakamatsu A."/>
            <person name="Hayashi K."/>
            <person name="Sato H."/>
            <person name="Nagai K."/>
            <person name="Kimura K."/>
            <person name="Makita H."/>
            <person name="Sekine M."/>
            <person name="Obayashi M."/>
            <person name="Nishi T."/>
            <person name="Shibahara T."/>
            <person name="Tanaka T."/>
            <person name="Ishii S."/>
            <person name="Yamamoto J."/>
            <person name="Saito K."/>
            <person name="Kawai Y."/>
            <person name="Isono Y."/>
            <person name="Nakamura Y."/>
            <person name="Nagahari K."/>
            <person name="Murakami K."/>
            <person name="Yasuda T."/>
            <person name="Iwayanagi T."/>
            <person name="Wagatsuma M."/>
            <person name="Shiratori A."/>
            <person name="Sudo H."/>
            <person name="Hosoiri T."/>
            <person name="Kaku Y."/>
            <person name="Kodaira H."/>
            <person name="Kondo H."/>
            <person name="Sugawara M."/>
            <person name="Takahashi M."/>
            <person name="Kanda K."/>
            <person name="Yokoi T."/>
            <person name="Furuya T."/>
            <person name="Kikkawa E."/>
            <person name="Omura Y."/>
            <person name="Abe K."/>
            <person name="Kamihara K."/>
            <person name="Katsuta N."/>
            <person name="Sato K."/>
            <person name="Tanikawa M."/>
            <person name="Yamazaki M."/>
            <person name="Ninomiya K."/>
            <person name="Ishibashi T."/>
            <person name="Yamashita H."/>
            <person name="Murakawa K."/>
            <person name="Fujimori K."/>
            <person name="Tanai H."/>
            <person name="Kimata M."/>
            <person name="Watanabe M."/>
            <person name="Hiraoka S."/>
            <person name="Chiba Y."/>
            <person name="Ishida S."/>
            <person name="Ono Y."/>
            <person name="Takiguchi S."/>
            <person name="Watanabe S."/>
            <person name="Yosida M."/>
            <person name="Hotuta T."/>
            <person name="Kusano J."/>
            <person name="Kanehori K."/>
            <person name="Takahashi-Fujii A."/>
            <person name="Hara H."/>
            <person name="Tanase T.-O."/>
            <person name="Nomura Y."/>
            <person name="Togiya S."/>
            <person name="Komai F."/>
            <person name="Hara R."/>
            <person name="Takeuchi K."/>
            <person name="Arita M."/>
            <person name="Imose N."/>
            <person name="Musashino K."/>
            <person name="Yuuki H."/>
            <person name="Oshima A."/>
            <person name="Sasaki N."/>
            <person name="Aotsuka S."/>
            <person name="Yoshikawa Y."/>
            <person name="Matsunawa H."/>
            <person name="Ichihara T."/>
            <person name="Shiohata N."/>
            <person name="Sano S."/>
            <person name="Moriya S."/>
            <person name="Momiyama H."/>
            <person name="Satoh N."/>
            <person name="Takami S."/>
            <person name="Terashima Y."/>
            <person name="Suzuki O."/>
            <person name="Nakagawa S."/>
            <person name="Senoh A."/>
            <person name="Mizoguchi H."/>
            <person name="Goto Y."/>
            <person name="Shimizu F."/>
            <person name="Wakebe H."/>
            <person name="Hishigaki H."/>
            <person name="Watanabe T."/>
            <person name="Sugiyama A."/>
            <person name="Takemoto M."/>
            <person name="Kawakami B."/>
            <person name="Yamazaki M."/>
            <person name="Watanabe K."/>
            <person name="Kumagai A."/>
            <person name="Itakura S."/>
            <person name="Fukuzumi Y."/>
            <person name="Fujimori Y."/>
            <person name="Komiyama M."/>
            <person name="Tashiro H."/>
            <person name="Tanigami A."/>
            <person name="Fujiwara T."/>
            <person name="Ono T."/>
            <person name="Yamada K."/>
            <person name="Fujii Y."/>
            <person name="Ozaki K."/>
            <person name="Hirao M."/>
            <person name="Ohmori Y."/>
            <person name="Kawabata A."/>
            <person name="Hikiji T."/>
            <person name="Kobatake N."/>
            <person name="Inagaki H."/>
            <person name="Ikema Y."/>
            <person name="Okamoto S."/>
            <person name="Okitani R."/>
            <person name="Kawakami T."/>
            <person name="Noguchi S."/>
            <person name="Itoh T."/>
            <person name="Shigeta K."/>
            <person name="Senba T."/>
            <person name="Matsumura K."/>
            <person name="Nakajima Y."/>
            <person name="Mizuno T."/>
            <person name="Morinaga M."/>
            <person name="Sasaki M."/>
            <person name="Togashi T."/>
            <person name="Oyama M."/>
            <person name="Hata H."/>
            <person name="Watanabe M."/>
            <person name="Komatsu T."/>
            <person name="Mizushima-Sugano J."/>
            <person name="Satoh T."/>
            <person name="Shirai Y."/>
            <person name="Takahashi Y."/>
            <person name="Nakagawa K."/>
            <person name="Okumura K."/>
            <person name="Nagase T."/>
            <person name="Nomura N."/>
            <person name="Kikuchi H."/>
            <person name="Masuho Y."/>
            <person name="Yamashita R."/>
            <person name="Nakai K."/>
            <person name="Yada T."/>
            <person name="Nakamura Y."/>
            <person name="Ohara O."/>
            <person name="Isogai T."/>
            <person name="Sugano S."/>
        </authorList>
    </citation>
    <scope>NUCLEOTIDE SEQUENCE [LARGE SCALE MRNA]</scope>
    <source>
        <tissue>Brain</tissue>
    </source>
</reference>
<reference key="4">
    <citation type="submission" date="2005-07" db="EMBL/GenBank/DDBJ databases">
        <authorList>
            <person name="Mural R.J."/>
            <person name="Istrail S."/>
            <person name="Sutton G.G."/>
            <person name="Florea L."/>
            <person name="Halpern A.L."/>
            <person name="Mobarry C.M."/>
            <person name="Lippert R."/>
            <person name="Walenz B."/>
            <person name="Shatkay H."/>
            <person name="Dew I."/>
            <person name="Miller J.R."/>
            <person name="Flanigan M.J."/>
            <person name="Edwards N.J."/>
            <person name="Bolanos R."/>
            <person name="Fasulo D."/>
            <person name="Halldorsson B.V."/>
            <person name="Hannenhalli S."/>
            <person name="Turner R."/>
            <person name="Yooseph S."/>
            <person name="Lu F."/>
            <person name="Nusskern D.R."/>
            <person name="Shue B.C."/>
            <person name="Zheng X.H."/>
            <person name="Zhong F."/>
            <person name="Delcher A.L."/>
            <person name="Huson D.H."/>
            <person name="Kravitz S.A."/>
            <person name="Mouchard L."/>
            <person name="Reinert K."/>
            <person name="Remington K.A."/>
            <person name="Clark A.G."/>
            <person name="Waterman M.S."/>
            <person name="Eichler E.E."/>
            <person name="Adams M.D."/>
            <person name="Hunkapiller M.W."/>
            <person name="Myers E.W."/>
            <person name="Venter J.C."/>
        </authorList>
    </citation>
    <scope>NUCLEOTIDE SEQUENCE [LARGE SCALE GENOMIC DNA]</scope>
</reference>
<reference key="5">
    <citation type="journal article" date="2004" name="Genome Res.">
        <title>The status, quality, and expansion of the NIH full-length cDNA project: the Mammalian Gene Collection (MGC).</title>
        <authorList>
            <consortium name="The MGC Project Team"/>
        </authorList>
    </citation>
    <scope>NUCLEOTIDE SEQUENCE [LARGE SCALE MRNA]</scope>
    <source>
        <tissue>Brain</tissue>
        <tissue>Uterus</tissue>
    </source>
</reference>
<reference key="6">
    <citation type="journal article" date="2011" name="BMC Syst. Biol.">
        <title>Initial characterization of the human central proteome.</title>
        <authorList>
            <person name="Burkard T.R."/>
            <person name="Planyavsky M."/>
            <person name="Kaupe I."/>
            <person name="Breitwieser F.P."/>
            <person name="Buerckstuemmer T."/>
            <person name="Bennett K.L."/>
            <person name="Superti-Furga G."/>
            <person name="Colinge J."/>
        </authorList>
    </citation>
    <scope>IDENTIFICATION BY MASS SPECTROMETRY [LARGE SCALE ANALYSIS]</scope>
</reference>